<sequence length="360" mass="40450">MLKEKNSAGGGKFNFFNFLKEKDNNQAEPSNVKEFISYLKNKIINEKYEITREEAIFLSQIPNNDMETLNILFNAADQIREVFCGKYFDLCTIINAKSGKCSENCKYCAQSVHFKTGTDVYGLISKELALYEAKRNENEGAHRFSLVTSGRGLNGNEKELDKLVEIYKYIGEHTSKLELCASHGICTKEALQKLVDAGVLTYHHNLESSRRFYPNVCTSHSYDDRINTIKNAKAVGLDVCSGGIFGLGETIEDRIDMALDLRALEIHSVPINVLTPIPGTPFENNEEVNPFEILKTISIYRFIMPKSFLRYCGGRIKLGEHAKTGLRCGINSALTGNFLTTTGTTIETDKKMIKELGYEI</sequence>
<comment type="function">
    <text evidence="1">Catalyzes the conversion of dethiobiotin (DTB) to biotin by the insertion of a sulfur atom into dethiobiotin via a radical-based mechanism.</text>
</comment>
<comment type="catalytic activity">
    <reaction evidence="1">
        <text>(4R,5S)-dethiobiotin + (sulfur carrier)-SH + 2 reduced [2Fe-2S]-[ferredoxin] + 2 S-adenosyl-L-methionine = (sulfur carrier)-H + biotin + 2 5'-deoxyadenosine + 2 L-methionine + 2 oxidized [2Fe-2S]-[ferredoxin]</text>
        <dbReference type="Rhea" id="RHEA:22060"/>
        <dbReference type="Rhea" id="RHEA-COMP:10000"/>
        <dbReference type="Rhea" id="RHEA-COMP:10001"/>
        <dbReference type="Rhea" id="RHEA-COMP:14737"/>
        <dbReference type="Rhea" id="RHEA-COMP:14739"/>
        <dbReference type="ChEBI" id="CHEBI:17319"/>
        <dbReference type="ChEBI" id="CHEBI:29917"/>
        <dbReference type="ChEBI" id="CHEBI:33737"/>
        <dbReference type="ChEBI" id="CHEBI:33738"/>
        <dbReference type="ChEBI" id="CHEBI:57586"/>
        <dbReference type="ChEBI" id="CHEBI:57844"/>
        <dbReference type="ChEBI" id="CHEBI:59789"/>
        <dbReference type="ChEBI" id="CHEBI:64428"/>
        <dbReference type="ChEBI" id="CHEBI:149473"/>
        <dbReference type="EC" id="2.8.1.6"/>
    </reaction>
</comment>
<comment type="cofactor">
    <cofactor evidence="1">
        <name>[4Fe-4S] cluster</name>
        <dbReference type="ChEBI" id="CHEBI:49883"/>
    </cofactor>
    <text evidence="1">Binds 1 [4Fe-4S] cluster. The cluster is coordinated with 3 cysteines and an exchangeable S-adenosyl-L-methionine.</text>
</comment>
<comment type="cofactor">
    <cofactor evidence="1">
        <name>[2Fe-2S] cluster</name>
        <dbReference type="ChEBI" id="CHEBI:190135"/>
    </cofactor>
    <text evidence="1">Binds 1 [2Fe-2S] cluster. The cluster is coordinated with 3 cysteines and 1 arginine.</text>
</comment>
<comment type="pathway">
    <text evidence="1">Cofactor biosynthesis; biotin biosynthesis; biotin from 7,8-diaminononanoate: step 2/2.</text>
</comment>
<comment type="subunit">
    <text evidence="1">Homodimer.</text>
</comment>
<comment type="similarity">
    <text evidence="1">Belongs to the radical SAM superfamily. Biotin synthase family.</text>
</comment>
<accession>Q8REU0</accession>
<gene>
    <name evidence="1" type="primary">bioB</name>
    <name type="ordered locus">FN1000</name>
</gene>
<proteinExistence type="inferred from homology"/>
<feature type="chain" id="PRO_0000381399" description="Biotin synthase">
    <location>
        <begin position="1"/>
        <end position="360"/>
    </location>
</feature>
<feature type="domain" description="Radical SAM core" evidence="2">
    <location>
        <begin position="83"/>
        <end position="315"/>
    </location>
</feature>
<feature type="binding site" evidence="1">
    <location>
        <position position="101"/>
    </location>
    <ligand>
        <name>[4Fe-4S] cluster</name>
        <dbReference type="ChEBI" id="CHEBI:49883"/>
        <note>4Fe-4S-S-AdoMet</note>
    </ligand>
</feature>
<feature type="binding site" evidence="1">
    <location>
        <position position="105"/>
    </location>
    <ligand>
        <name>[4Fe-4S] cluster</name>
        <dbReference type="ChEBI" id="CHEBI:49883"/>
        <note>4Fe-4S-S-AdoMet</note>
    </ligand>
</feature>
<feature type="binding site" evidence="1">
    <location>
        <position position="108"/>
    </location>
    <ligand>
        <name>[4Fe-4S] cluster</name>
        <dbReference type="ChEBI" id="CHEBI:49883"/>
        <note>4Fe-4S-S-AdoMet</note>
    </ligand>
</feature>
<feature type="binding site" evidence="1">
    <location>
        <position position="145"/>
    </location>
    <ligand>
        <name>[2Fe-2S] cluster</name>
        <dbReference type="ChEBI" id="CHEBI:190135"/>
    </ligand>
</feature>
<feature type="binding site" evidence="1">
    <location>
        <position position="180"/>
    </location>
    <ligand>
        <name>[2Fe-2S] cluster</name>
        <dbReference type="ChEBI" id="CHEBI:190135"/>
    </ligand>
</feature>
<feature type="binding site" evidence="1">
    <location>
        <position position="240"/>
    </location>
    <ligand>
        <name>[2Fe-2S] cluster</name>
        <dbReference type="ChEBI" id="CHEBI:190135"/>
    </ligand>
</feature>
<feature type="binding site" evidence="1">
    <location>
        <position position="310"/>
    </location>
    <ligand>
        <name>[2Fe-2S] cluster</name>
        <dbReference type="ChEBI" id="CHEBI:190135"/>
    </ligand>
</feature>
<dbReference type="EC" id="2.8.1.6" evidence="1"/>
<dbReference type="EMBL" id="AE009951">
    <property type="protein sequence ID" value="AAL95196.1"/>
    <property type="molecule type" value="Genomic_DNA"/>
</dbReference>
<dbReference type="RefSeq" id="NP_603897.1">
    <property type="nucleotide sequence ID" value="NC_003454.1"/>
</dbReference>
<dbReference type="RefSeq" id="WP_011016821.1">
    <property type="nucleotide sequence ID" value="NZ_OZ209243.1"/>
</dbReference>
<dbReference type="SMR" id="Q8REU0"/>
<dbReference type="FunCoup" id="Q8REU0">
    <property type="interactions" value="282"/>
</dbReference>
<dbReference type="STRING" id="190304.FN1000"/>
<dbReference type="PaxDb" id="190304-FN1000"/>
<dbReference type="EnsemblBacteria" id="AAL95196">
    <property type="protein sequence ID" value="AAL95196"/>
    <property type="gene ID" value="FN1000"/>
</dbReference>
<dbReference type="GeneID" id="79783983"/>
<dbReference type="KEGG" id="fnu:FN1000"/>
<dbReference type="PATRIC" id="fig|190304.8.peg.1565"/>
<dbReference type="eggNOG" id="COG0502">
    <property type="taxonomic scope" value="Bacteria"/>
</dbReference>
<dbReference type="HOGENOM" id="CLU_033172_2_1_0"/>
<dbReference type="InParanoid" id="Q8REU0"/>
<dbReference type="BioCyc" id="FNUC190304:G1FZS-1582-MONOMER"/>
<dbReference type="UniPathway" id="UPA00078">
    <property type="reaction ID" value="UER00162"/>
</dbReference>
<dbReference type="Proteomes" id="UP000002521">
    <property type="component" value="Chromosome"/>
</dbReference>
<dbReference type="GO" id="GO:0051537">
    <property type="term" value="F:2 iron, 2 sulfur cluster binding"/>
    <property type="evidence" value="ECO:0000318"/>
    <property type="project" value="GO_Central"/>
</dbReference>
<dbReference type="GO" id="GO:0051539">
    <property type="term" value="F:4 iron, 4 sulfur cluster binding"/>
    <property type="evidence" value="ECO:0007669"/>
    <property type="project" value="UniProtKB-KW"/>
</dbReference>
<dbReference type="GO" id="GO:0004076">
    <property type="term" value="F:biotin synthase activity"/>
    <property type="evidence" value="ECO:0000318"/>
    <property type="project" value="GO_Central"/>
</dbReference>
<dbReference type="GO" id="GO:0005506">
    <property type="term" value="F:iron ion binding"/>
    <property type="evidence" value="ECO:0007669"/>
    <property type="project" value="UniProtKB-UniRule"/>
</dbReference>
<dbReference type="GO" id="GO:0009102">
    <property type="term" value="P:biotin biosynthetic process"/>
    <property type="evidence" value="ECO:0000318"/>
    <property type="project" value="GO_Central"/>
</dbReference>
<dbReference type="CDD" id="cd01335">
    <property type="entry name" value="Radical_SAM"/>
    <property type="match status" value="1"/>
</dbReference>
<dbReference type="FunFam" id="3.20.20.70:FF:000026">
    <property type="entry name" value="Biotin synthase"/>
    <property type="match status" value="1"/>
</dbReference>
<dbReference type="Gene3D" id="3.20.20.70">
    <property type="entry name" value="Aldolase class I"/>
    <property type="match status" value="1"/>
</dbReference>
<dbReference type="HAMAP" id="MF_01694">
    <property type="entry name" value="BioB"/>
    <property type="match status" value="1"/>
</dbReference>
<dbReference type="InterPro" id="IPR013785">
    <property type="entry name" value="Aldolase_TIM"/>
</dbReference>
<dbReference type="InterPro" id="IPR010722">
    <property type="entry name" value="BATS_dom"/>
</dbReference>
<dbReference type="InterPro" id="IPR002684">
    <property type="entry name" value="Biotin_synth/BioAB"/>
</dbReference>
<dbReference type="InterPro" id="IPR024177">
    <property type="entry name" value="Biotin_synthase"/>
</dbReference>
<dbReference type="InterPro" id="IPR006638">
    <property type="entry name" value="Elp3/MiaA/NifB-like_rSAM"/>
</dbReference>
<dbReference type="InterPro" id="IPR007197">
    <property type="entry name" value="rSAM"/>
</dbReference>
<dbReference type="NCBIfam" id="TIGR00433">
    <property type="entry name" value="bioB"/>
    <property type="match status" value="1"/>
</dbReference>
<dbReference type="PANTHER" id="PTHR22976">
    <property type="entry name" value="BIOTIN SYNTHASE"/>
    <property type="match status" value="1"/>
</dbReference>
<dbReference type="PANTHER" id="PTHR22976:SF2">
    <property type="entry name" value="BIOTIN SYNTHASE, MITOCHONDRIAL"/>
    <property type="match status" value="1"/>
</dbReference>
<dbReference type="Pfam" id="PF06968">
    <property type="entry name" value="BATS"/>
    <property type="match status" value="1"/>
</dbReference>
<dbReference type="Pfam" id="PF04055">
    <property type="entry name" value="Radical_SAM"/>
    <property type="match status" value="1"/>
</dbReference>
<dbReference type="PIRSF" id="PIRSF001619">
    <property type="entry name" value="Biotin_synth"/>
    <property type="match status" value="1"/>
</dbReference>
<dbReference type="SFLD" id="SFLDG01060">
    <property type="entry name" value="BATS_domain_containing"/>
    <property type="match status" value="1"/>
</dbReference>
<dbReference type="SFLD" id="SFLDG01278">
    <property type="entry name" value="biotin_synthase_like"/>
    <property type="match status" value="1"/>
</dbReference>
<dbReference type="SMART" id="SM00876">
    <property type="entry name" value="BATS"/>
    <property type="match status" value="1"/>
</dbReference>
<dbReference type="SMART" id="SM00729">
    <property type="entry name" value="Elp3"/>
    <property type="match status" value="1"/>
</dbReference>
<dbReference type="SUPFAM" id="SSF102114">
    <property type="entry name" value="Radical SAM enzymes"/>
    <property type="match status" value="1"/>
</dbReference>
<dbReference type="PROSITE" id="PS51918">
    <property type="entry name" value="RADICAL_SAM"/>
    <property type="match status" value="1"/>
</dbReference>
<organism>
    <name type="scientific">Fusobacterium nucleatum subsp. nucleatum (strain ATCC 25586 / DSM 15643 / BCRC 10681 / CIP 101130 / JCM 8532 / KCTC 2640 / LMG 13131 / VPI 4355)</name>
    <dbReference type="NCBI Taxonomy" id="190304"/>
    <lineage>
        <taxon>Bacteria</taxon>
        <taxon>Fusobacteriati</taxon>
        <taxon>Fusobacteriota</taxon>
        <taxon>Fusobacteriia</taxon>
        <taxon>Fusobacteriales</taxon>
        <taxon>Fusobacteriaceae</taxon>
        <taxon>Fusobacterium</taxon>
    </lineage>
</organism>
<keyword id="KW-0001">2Fe-2S</keyword>
<keyword id="KW-0004">4Fe-4S</keyword>
<keyword id="KW-0093">Biotin biosynthesis</keyword>
<keyword id="KW-0408">Iron</keyword>
<keyword id="KW-0411">Iron-sulfur</keyword>
<keyword id="KW-0479">Metal-binding</keyword>
<keyword id="KW-1185">Reference proteome</keyword>
<keyword id="KW-0949">S-adenosyl-L-methionine</keyword>
<keyword id="KW-0808">Transferase</keyword>
<name>BIOB_FUSNN</name>
<evidence type="ECO:0000255" key="1">
    <source>
        <dbReference type="HAMAP-Rule" id="MF_01694"/>
    </source>
</evidence>
<evidence type="ECO:0000255" key="2">
    <source>
        <dbReference type="PROSITE-ProRule" id="PRU01266"/>
    </source>
</evidence>
<reference key="1">
    <citation type="journal article" date="2002" name="J. Bacteriol.">
        <title>Genome sequence and analysis of the oral bacterium Fusobacterium nucleatum strain ATCC 25586.</title>
        <authorList>
            <person name="Kapatral V."/>
            <person name="Anderson I."/>
            <person name="Ivanova N."/>
            <person name="Reznik G."/>
            <person name="Los T."/>
            <person name="Lykidis A."/>
            <person name="Bhattacharyya A."/>
            <person name="Bartman A."/>
            <person name="Gardner W."/>
            <person name="Grechkin G."/>
            <person name="Zhu L."/>
            <person name="Vasieva O."/>
            <person name="Chu L."/>
            <person name="Kogan Y."/>
            <person name="Chaga O."/>
            <person name="Goltsman E."/>
            <person name="Bernal A."/>
            <person name="Larsen N."/>
            <person name="D'Souza M."/>
            <person name="Walunas T."/>
            <person name="Pusch G."/>
            <person name="Haselkorn R."/>
            <person name="Fonstein M."/>
            <person name="Kyrpides N.C."/>
            <person name="Overbeek R."/>
        </authorList>
    </citation>
    <scope>NUCLEOTIDE SEQUENCE [LARGE SCALE GENOMIC DNA]</scope>
    <source>
        <strain>ATCC 25586 / DSM 15643 / BCRC 10681 / CIP 101130 / JCM 8532 / KCTC 2640 / LMG 13131 / VPI 4355</strain>
    </source>
</reference>
<protein>
    <recommendedName>
        <fullName evidence="1">Biotin synthase</fullName>
        <ecNumber evidence="1">2.8.1.6</ecNumber>
    </recommendedName>
</protein>